<gene>
    <name evidence="1" type="primary">lpxK</name>
    <name type="ordered locus">Lcho_2555</name>
</gene>
<comment type="function">
    <text evidence="1">Transfers the gamma-phosphate of ATP to the 4'-position of a tetraacyldisaccharide 1-phosphate intermediate (termed DS-1-P) to form tetraacyldisaccharide 1,4'-bis-phosphate (lipid IVA).</text>
</comment>
<comment type="catalytic activity">
    <reaction evidence="1">
        <text>a lipid A disaccharide + ATP = a lipid IVA + ADP + H(+)</text>
        <dbReference type="Rhea" id="RHEA:67840"/>
        <dbReference type="ChEBI" id="CHEBI:15378"/>
        <dbReference type="ChEBI" id="CHEBI:30616"/>
        <dbReference type="ChEBI" id="CHEBI:176343"/>
        <dbReference type="ChEBI" id="CHEBI:176425"/>
        <dbReference type="ChEBI" id="CHEBI:456216"/>
        <dbReference type="EC" id="2.7.1.130"/>
    </reaction>
</comment>
<comment type="pathway">
    <text evidence="1">Glycolipid biosynthesis; lipid IV(A) biosynthesis; lipid IV(A) from (3R)-3-hydroxytetradecanoyl-[acyl-carrier-protein] and UDP-N-acetyl-alpha-D-glucosamine: step 6/6.</text>
</comment>
<comment type="similarity">
    <text evidence="1">Belongs to the LpxK family.</text>
</comment>
<dbReference type="EC" id="2.7.1.130" evidence="1"/>
<dbReference type="EMBL" id="CP001013">
    <property type="protein sequence ID" value="ACB34820.1"/>
    <property type="molecule type" value="Genomic_DNA"/>
</dbReference>
<dbReference type="RefSeq" id="WP_012347576.1">
    <property type="nucleotide sequence ID" value="NC_010524.1"/>
</dbReference>
<dbReference type="SMR" id="B1Y6I4"/>
<dbReference type="STRING" id="395495.Lcho_2555"/>
<dbReference type="KEGG" id="lch:Lcho_2555"/>
<dbReference type="eggNOG" id="COG1663">
    <property type="taxonomic scope" value="Bacteria"/>
</dbReference>
<dbReference type="HOGENOM" id="CLU_038816_2_0_4"/>
<dbReference type="OrthoDB" id="9766423at2"/>
<dbReference type="UniPathway" id="UPA00359">
    <property type="reaction ID" value="UER00482"/>
</dbReference>
<dbReference type="Proteomes" id="UP000001693">
    <property type="component" value="Chromosome"/>
</dbReference>
<dbReference type="GO" id="GO:0005886">
    <property type="term" value="C:plasma membrane"/>
    <property type="evidence" value="ECO:0007669"/>
    <property type="project" value="TreeGrafter"/>
</dbReference>
<dbReference type="GO" id="GO:0005524">
    <property type="term" value="F:ATP binding"/>
    <property type="evidence" value="ECO:0007669"/>
    <property type="project" value="UniProtKB-UniRule"/>
</dbReference>
<dbReference type="GO" id="GO:0009029">
    <property type="term" value="F:tetraacyldisaccharide 4'-kinase activity"/>
    <property type="evidence" value="ECO:0007669"/>
    <property type="project" value="UniProtKB-UniRule"/>
</dbReference>
<dbReference type="GO" id="GO:0009245">
    <property type="term" value="P:lipid A biosynthetic process"/>
    <property type="evidence" value="ECO:0007669"/>
    <property type="project" value="UniProtKB-UniRule"/>
</dbReference>
<dbReference type="GO" id="GO:0009244">
    <property type="term" value="P:lipopolysaccharide core region biosynthetic process"/>
    <property type="evidence" value="ECO:0007669"/>
    <property type="project" value="TreeGrafter"/>
</dbReference>
<dbReference type="HAMAP" id="MF_00409">
    <property type="entry name" value="LpxK"/>
    <property type="match status" value="1"/>
</dbReference>
<dbReference type="InterPro" id="IPR003758">
    <property type="entry name" value="LpxK"/>
</dbReference>
<dbReference type="InterPro" id="IPR027417">
    <property type="entry name" value="P-loop_NTPase"/>
</dbReference>
<dbReference type="NCBIfam" id="TIGR00682">
    <property type="entry name" value="lpxK"/>
    <property type="match status" value="1"/>
</dbReference>
<dbReference type="PANTHER" id="PTHR42724">
    <property type="entry name" value="TETRAACYLDISACCHARIDE 4'-KINASE"/>
    <property type="match status" value="1"/>
</dbReference>
<dbReference type="PANTHER" id="PTHR42724:SF1">
    <property type="entry name" value="TETRAACYLDISACCHARIDE 4'-KINASE, MITOCHONDRIAL-RELATED"/>
    <property type="match status" value="1"/>
</dbReference>
<dbReference type="Pfam" id="PF02606">
    <property type="entry name" value="LpxK"/>
    <property type="match status" value="1"/>
</dbReference>
<dbReference type="SUPFAM" id="SSF52540">
    <property type="entry name" value="P-loop containing nucleoside triphosphate hydrolases"/>
    <property type="match status" value="1"/>
</dbReference>
<organism>
    <name type="scientific">Leptothrix cholodnii (strain ATCC 51168 / LMG 8142 / SP-6)</name>
    <name type="common">Leptothrix discophora (strain SP-6)</name>
    <dbReference type="NCBI Taxonomy" id="395495"/>
    <lineage>
        <taxon>Bacteria</taxon>
        <taxon>Pseudomonadati</taxon>
        <taxon>Pseudomonadota</taxon>
        <taxon>Betaproteobacteria</taxon>
        <taxon>Burkholderiales</taxon>
        <taxon>Sphaerotilaceae</taxon>
        <taxon>Leptothrix</taxon>
    </lineage>
</organism>
<reference key="1">
    <citation type="submission" date="2008-03" db="EMBL/GenBank/DDBJ databases">
        <title>Complete sequence of Leptothrix cholodnii SP-6.</title>
        <authorList>
            <consortium name="US DOE Joint Genome Institute"/>
            <person name="Copeland A."/>
            <person name="Lucas S."/>
            <person name="Lapidus A."/>
            <person name="Glavina del Rio T."/>
            <person name="Dalin E."/>
            <person name="Tice H."/>
            <person name="Bruce D."/>
            <person name="Goodwin L."/>
            <person name="Pitluck S."/>
            <person name="Chertkov O."/>
            <person name="Brettin T."/>
            <person name="Detter J.C."/>
            <person name="Han C."/>
            <person name="Kuske C.R."/>
            <person name="Schmutz J."/>
            <person name="Larimer F."/>
            <person name="Land M."/>
            <person name="Hauser L."/>
            <person name="Kyrpides N."/>
            <person name="Lykidis A."/>
            <person name="Emerson D."/>
            <person name="Richardson P."/>
        </authorList>
    </citation>
    <scope>NUCLEOTIDE SEQUENCE [LARGE SCALE GENOMIC DNA]</scope>
    <source>
        <strain>ATCC 51168 / LMG 8142 / SP-6</strain>
    </source>
</reference>
<keyword id="KW-0067">ATP-binding</keyword>
<keyword id="KW-0418">Kinase</keyword>
<keyword id="KW-0441">Lipid A biosynthesis</keyword>
<keyword id="KW-0444">Lipid biosynthesis</keyword>
<keyword id="KW-0443">Lipid metabolism</keyword>
<keyword id="KW-0547">Nucleotide-binding</keyword>
<keyword id="KW-1185">Reference proteome</keyword>
<keyword id="KW-0808">Transferase</keyword>
<feature type="chain" id="PRO_1000123723" description="Tetraacyldisaccharide 4'-kinase">
    <location>
        <begin position="1"/>
        <end position="348"/>
    </location>
</feature>
<feature type="region of interest" description="Disordered" evidence="2">
    <location>
        <begin position="89"/>
        <end position="117"/>
    </location>
</feature>
<feature type="binding site" evidence="1">
    <location>
        <begin position="65"/>
        <end position="72"/>
    </location>
    <ligand>
        <name>ATP</name>
        <dbReference type="ChEBI" id="CHEBI:30616"/>
    </ligand>
</feature>
<protein>
    <recommendedName>
        <fullName evidence="1">Tetraacyldisaccharide 4'-kinase</fullName>
        <ecNumber evidence="1">2.7.1.130</ecNumber>
    </recommendedName>
    <alternativeName>
        <fullName evidence="1">Lipid A 4'-kinase</fullName>
    </alternativeName>
</protein>
<accession>B1Y6I4</accession>
<sequence length="348" mass="37903">MSGTADRLAARIERAWQDGGALQWALRPLALLMRGAVTARRALYRCGAWRTERLGVPVIVVGNRVAGGAGKTPTTLAIVAALQQAGRQPGIVSRGHGSREREARPVSADSTAQSVGDEPLLMQRRAQVPVWVGRDRVAAGRALLAAHPQVDVLVCDDGLQHLRLRRDVEVIVFDERGAGNGWLLPAGPLREPIDAPTDARQIVLYNAERPSTALPGHCARRRLAGLVELGAWWQGADARAELPPELKRQPVLASAGIGQPGRFFDSLRTLGLAIEPWPLPDHHGFDTLPWPAQTRDVIVTEKDAVKLPLQRLRAERPGLRVWVAPLLFDLPETFVSELLAALPARRPD</sequence>
<evidence type="ECO:0000255" key="1">
    <source>
        <dbReference type="HAMAP-Rule" id="MF_00409"/>
    </source>
</evidence>
<evidence type="ECO:0000256" key="2">
    <source>
        <dbReference type="SAM" id="MobiDB-lite"/>
    </source>
</evidence>
<name>LPXK_LEPCP</name>
<proteinExistence type="inferred from homology"/>